<comment type="function">
    <text evidence="1">Plays a pivotal role in the establishment of adherens junctions and their maintenance in adult life. Required for morphogenesis of the preimplantation embryo, and for the implantation process.</text>
</comment>
<comment type="subunit">
    <text evidence="1 2">Interacts with USH2A (via the cytoplasmic region); the interaction associates VEZT with the USH2 complex at the stereocilia base (By similarity). Interacts with myosin MYO7A and the cadherin-catenins complex (By similarity).</text>
</comment>
<comment type="subcellular location">
    <subcellularLocation>
        <location evidence="1">Cell membrane</location>
        <topology evidence="1">Multi-pass membrane protein</topology>
    </subcellularLocation>
    <subcellularLocation>
        <location evidence="1">Cell projection</location>
        <location evidence="1">Stereocilium membrane</location>
    </subcellularLocation>
    <subcellularLocation>
        <location evidence="1">Cell junction</location>
        <location evidence="1">Adherens junction</location>
    </subcellularLocation>
    <subcellularLocation>
        <location evidence="1">Nucleus</location>
    </subcellularLocation>
    <subcellularLocation>
        <location evidence="1">Cytoplasmic vesicle</location>
        <location evidence="1">Secretory vesicle</location>
        <location evidence="1">Acrosome</location>
    </subcellularLocation>
</comment>
<comment type="similarity">
    <text evidence="5">Belongs to the vezatin family.</text>
</comment>
<reference key="1">
    <citation type="submission" date="2004-11" db="EMBL/GenBank/DDBJ databases">
        <authorList>
            <consortium name="The German cDNA consortium"/>
        </authorList>
    </citation>
    <scope>NUCLEOTIDE SEQUENCE [LARGE SCALE MRNA]</scope>
    <source>
        <tissue>Kidney</tissue>
    </source>
</reference>
<evidence type="ECO:0000250" key="1">
    <source>
        <dbReference type="UniProtKB" id="Q3ZK22"/>
    </source>
</evidence>
<evidence type="ECO:0000250" key="2">
    <source>
        <dbReference type="UniProtKB" id="Q9HBM0"/>
    </source>
</evidence>
<evidence type="ECO:0000255" key="3"/>
<evidence type="ECO:0000256" key="4">
    <source>
        <dbReference type="SAM" id="MobiDB-lite"/>
    </source>
</evidence>
<evidence type="ECO:0000305" key="5"/>
<name>VEZA_PONAB</name>
<gene>
    <name type="primary">VEZT</name>
</gene>
<keyword id="KW-0965">Cell junction</keyword>
<keyword id="KW-1003">Cell membrane</keyword>
<keyword id="KW-0966">Cell projection</keyword>
<keyword id="KW-0175">Coiled coil</keyword>
<keyword id="KW-0968">Cytoplasmic vesicle</keyword>
<keyword id="KW-0472">Membrane</keyword>
<keyword id="KW-0539">Nucleus</keyword>
<keyword id="KW-1185">Reference proteome</keyword>
<keyword id="KW-0812">Transmembrane</keyword>
<keyword id="KW-1133">Transmembrane helix</keyword>
<sequence>MLKEWAIKQGILLKVAETIKSWIFFSQCNKKDDLLHKLDIGFRLDSLHTILQQEVLLQEDVELIELLDPSILSAGQSQQQENGHLPTLCSLATPNIWDLSMLFAFISLLVMLPTWWIVSSWLVWGVILFVYLVIRALRLWRTAKLQVTLKKYSVHLEDMATNSRAFTNLVRKALRLIQETEVISRGFTLVSAACPFNKAGQHPSQHLIGLRKAVYRTLRANFQAARLATLYMLKNYPLNSESDNVTNYICVVPFKELGLGLSEEQISEEEAHNFTDGFSLPALKVLFQLWVAQSSEFFRRLALLLSTTNSPPGPLLTPALLPHRILSDVTQGLPHAHSACLEELKRSYEFYRYFETQHQSVPQCLSKTQQKSRELNNVHTAVRSLQLHLKALLNEVIILEDELEKLVCTKETQELVSEAYPILEQKLKLIQPHVQASNNCWEEAISQVDKLLRRNTDKKGKPEIACENPHCTVVPLKQPTLHIADKDPIPEEQELEAYVDDIDIDSDFRKDDFYYLSQEDKERQKLEHEESKRVLQELKSVLGFKASEAERQKWKQLLFSDHAVLKSLSPVDPVEPISNSEPSMNSDMGKVSKNDTEEESSKSTTTDNEISRTEYLCENSLEGKNKDNSSNEVFRQGAEERMCYQCESEDEPQADGSGLTTAPPTPRDSLQPSIKQRLARLQLSPDFTFTAGLAAEVAARSLSFTTMQEQTFGDEEEEQIIEENKNKIEEK</sequence>
<dbReference type="EMBL" id="CR857138">
    <property type="protein sequence ID" value="CAH89440.1"/>
    <property type="molecule type" value="mRNA"/>
</dbReference>
<dbReference type="RefSeq" id="NP_001124614.1">
    <property type="nucleotide sequence ID" value="NM_001131142.1"/>
</dbReference>
<dbReference type="SMR" id="Q5RFL7"/>
<dbReference type="STRING" id="9601.ENSPPYP00000005524"/>
<dbReference type="GeneID" id="100171451"/>
<dbReference type="KEGG" id="pon:100171451"/>
<dbReference type="CTD" id="55591"/>
<dbReference type="eggNOG" id="ENOG502QTQW">
    <property type="taxonomic scope" value="Eukaryota"/>
</dbReference>
<dbReference type="InParanoid" id="Q5RFL7"/>
<dbReference type="OrthoDB" id="21151at2759"/>
<dbReference type="Proteomes" id="UP000001595">
    <property type="component" value="Unplaced"/>
</dbReference>
<dbReference type="GO" id="GO:0001669">
    <property type="term" value="C:acrosomal vesicle"/>
    <property type="evidence" value="ECO:0007669"/>
    <property type="project" value="UniProtKB-SubCell"/>
</dbReference>
<dbReference type="GO" id="GO:0005912">
    <property type="term" value="C:adherens junction"/>
    <property type="evidence" value="ECO:0007669"/>
    <property type="project" value="UniProtKB-SubCell"/>
</dbReference>
<dbReference type="GO" id="GO:0005634">
    <property type="term" value="C:nucleus"/>
    <property type="evidence" value="ECO:0007669"/>
    <property type="project" value="UniProtKB-SubCell"/>
</dbReference>
<dbReference type="GO" id="GO:0002142">
    <property type="term" value="C:stereocilia ankle link complex"/>
    <property type="evidence" value="ECO:0000250"/>
    <property type="project" value="UniProtKB"/>
</dbReference>
<dbReference type="GO" id="GO:0060171">
    <property type="term" value="C:stereocilium membrane"/>
    <property type="evidence" value="ECO:0007669"/>
    <property type="project" value="UniProtKB-SubCell"/>
</dbReference>
<dbReference type="GO" id="GO:0017022">
    <property type="term" value="F:myosin binding"/>
    <property type="evidence" value="ECO:0007669"/>
    <property type="project" value="InterPro"/>
</dbReference>
<dbReference type="GO" id="GO:0098609">
    <property type="term" value="P:cell-cell adhesion"/>
    <property type="evidence" value="ECO:0007669"/>
    <property type="project" value="InterPro"/>
</dbReference>
<dbReference type="InterPro" id="IPR026859">
    <property type="entry name" value="Myosin-bd"/>
</dbReference>
<dbReference type="InterPro" id="IPR026858">
    <property type="entry name" value="Vezatin"/>
</dbReference>
<dbReference type="PANTHER" id="PTHR15989">
    <property type="entry name" value="VEZATIN"/>
    <property type="match status" value="1"/>
</dbReference>
<dbReference type="PANTHER" id="PTHR15989:SF5">
    <property type="entry name" value="VEZATIN"/>
    <property type="match status" value="1"/>
</dbReference>
<dbReference type="Pfam" id="PF12632">
    <property type="entry name" value="Vezatin"/>
    <property type="match status" value="1"/>
</dbReference>
<protein>
    <recommendedName>
        <fullName>Vezatin</fullName>
    </recommendedName>
</protein>
<proteinExistence type="evidence at transcript level"/>
<accession>Q5RFL7</accession>
<organism>
    <name type="scientific">Pongo abelii</name>
    <name type="common">Sumatran orangutan</name>
    <name type="synonym">Pongo pygmaeus abelii</name>
    <dbReference type="NCBI Taxonomy" id="9601"/>
    <lineage>
        <taxon>Eukaryota</taxon>
        <taxon>Metazoa</taxon>
        <taxon>Chordata</taxon>
        <taxon>Craniata</taxon>
        <taxon>Vertebrata</taxon>
        <taxon>Euteleostomi</taxon>
        <taxon>Mammalia</taxon>
        <taxon>Eutheria</taxon>
        <taxon>Euarchontoglires</taxon>
        <taxon>Primates</taxon>
        <taxon>Haplorrhini</taxon>
        <taxon>Catarrhini</taxon>
        <taxon>Hominidae</taxon>
        <taxon>Pongo</taxon>
    </lineage>
</organism>
<feature type="chain" id="PRO_0000349249" description="Vezatin">
    <location>
        <begin position="1"/>
        <end position="731"/>
    </location>
</feature>
<feature type="transmembrane region" description="Helical" evidence="3">
    <location>
        <begin position="91"/>
        <end position="111"/>
    </location>
</feature>
<feature type="transmembrane region" description="Helical" evidence="3">
    <location>
        <begin position="114"/>
        <end position="134"/>
    </location>
</feature>
<feature type="region of interest" description="Disordered" evidence="4">
    <location>
        <begin position="570"/>
        <end position="671"/>
    </location>
</feature>
<feature type="region of interest" description="Disordered" evidence="4">
    <location>
        <begin position="710"/>
        <end position="731"/>
    </location>
</feature>
<feature type="coiled-coil region" evidence="3">
    <location>
        <begin position="382"/>
        <end position="414"/>
    </location>
</feature>
<feature type="compositionally biased region" description="Polar residues" evidence="4">
    <location>
        <begin position="577"/>
        <end position="586"/>
    </location>
</feature>
<feature type="compositionally biased region" description="Basic and acidic residues" evidence="4">
    <location>
        <begin position="590"/>
        <end position="601"/>
    </location>
</feature>
<feature type="compositionally biased region" description="Polar residues" evidence="4">
    <location>
        <begin position="658"/>
        <end position="671"/>
    </location>
</feature>
<feature type="compositionally biased region" description="Acidic residues" evidence="4">
    <location>
        <begin position="712"/>
        <end position="721"/>
    </location>
</feature>
<feature type="compositionally biased region" description="Basic and acidic residues" evidence="4">
    <location>
        <begin position="722"/>
        <end position="731"/>
    </location>
</feature>